<evidence type="ECO:0000255" key="1">
    <source>
        <dbReference type="PROSITE-ProRule" id="PRU00238"/>
    </source>
</evidence>
<evidence type="ECO:0007829" key="2">
    <source>
        <dbReference type="PDB" id="2R80"/>
    </source>
</evidence>
<evidence type="ECO:0007829" key="3">
    <source>
        <dbReference type="PDB" id="3DHR"/>
    </source>
</evidence>
<dbReference type="PIR" id="A61432">
    <property type="entry name" value="HBPY"/>
</dbReference>
<dbReference type="PDB" id="2R80">
    <property type="method" value="X-ray"/>
    <property type="resolution" value="1.44 A"/>
    <property type="chains" value="B/D=1-146"/>
</dbReference>
<dbReference type="PDB" id="3DHR">
    <property type="method" value="X-ray"/>
    <property type="resolution" value="2.00 A"/>
    <property type="chains" value="B/D/F/H=1-146"/>
</dbReference>
<dbReference type="PDB" id="3MJU">
    <property type="method" value="X-ray"/>
    <property type="resolution" value="3.50 A"/>
    <property type="chains" value="B=1-146"/>
</dbReference>
<dbReference type="PDBsum" id="2R80"/>
<dbReference type="PDBsum" id="3DHR"/>
<dbReference type="PDBsum" id="3MJU"/>
<dbReference type="SMR" id="P11342"/>
<dbReference type="eggNOG" id="KOG3378">
    <property type="taxonomic scope" value="Eukaryota"/>
</dbReference>
<dbReference type="EvolutionaryTrace" id="P11342"/>
<dbReference type="GO" id="GO:0072562">
    <property type="term" value="C:blood microparticle"/>
    <property type="evidence" value="ECO:0007669"/>
    <property type="project" value="TreeGrafter"/>
</dbReference>
<dbReference type="GO" id="GO:0031838">
    <property type="term" value="C:haptoglobin-hemoglobin complex"/>
    <property type="evidence" value="ECO:0007669"/>
    <property type="project" value="TreeGrafter"/>
</dbReference>
<dbReference type="GO" id="GO:0005833">
    <property type="term" value="C:hemoglobin complex"/>
    <property type="evidence" value="ECO:0007669"/>
    <property type="project" value="InterPro"/>
</dbReference>
<dbReference type="GO" id="GO:0031720">
    <property type="term" value="F:haptoglobin binding"/>
    <property type="evidence" value="ECO:0007669"/>
    <property type="project" value="TreeGrafter"/>
</dbReference>
<dbReference type="GO" id="GO:0020037">
    <property type="term" value="F:heme binding"/>
    <property type="evidence" value="ECO:0007669"/>
    <property type="project" value="InterPro"/>
</dbReference>
<dbReference type="GO" id="GO:0046872">
    <property type="term" value="F:metal ion binding"/>
    <property type="evidence" value="ECO:0007669"/>
    <property type="project" value="UniProtKB-KW"/>
</dbReference>
<dbReference type="GO" id="GO:0043177">
    <property type="term" value="F:organic acid binding"/>
    <property type="evidence" value="ECO:0007669"/>
    <property type="project" value="TreeGrafter"/>
</dbReference>
<dbReference type="GO" id="GO:0019825">
    <property type="term" value="F:oxygen binding"/>
    <property type="evidence" value="ECO:0007669"/>
    <property type="project" value="InterPro"/>
</dbReference>
<dbReference type="GO" id="GO:0005344">
    <property type="term" value="F:oxygen carrier activity"/>
    <property type="evidence" value="ECO:0007669"/>
    <property type="project" value="UniProtKB-KW"/>
</dbReference>
<dbReference type="GO" id="GO:0004601">
    <property type="term" value="F:peroxidase activity"/>
    <property type="evidence" value="ECO:0007669"/>
    <property type="project" value="TreeGrafter"/>
</dbReference>
<dbReference type="GO" id="GO:0042744">
    <property type="term" value="P:hydrogen peroxide catabolic process"/>
    <property type="evidence" value="ECO:0007669"/>
    <property type="project" value="TreeGrafter"/>
</dbReference>
<dbReference type="CDD" id="cd08925">
    <property type="entry name" value="Hb-beta-like"/>
    <property type="match status" value="1"/>
</dbReference>
<dbReference type="FunFam" id="1.10.490.10:FF:000001">
    <property type="entry name" value="Hemoglobin subunit beta"/>
    <property type="match status" value="1"/>
</dbReference>
<dbReference type="Gene3D" id="1.10.490.10">
    <property type="entry name" value="Globins"/>
    <property type="match status" value="1"/>
</dbReference>
<dbReference type="InterPro" id="IPR000971">
    <property type="entry name" value="Globin"/>
</dbReference>
<dbReference type="InterPro" id="IPR009050">
    <property type="entry name" value="Globin-like_sf"/>
</dbReference>
<dbReference type="InterPro" id="IPR012292">
    <property type="entry name" value="Globin/Proto"/>
</dbReference>
<dbReference type="InterPro" id="IPR002337">
    <property type="entry name" value="Hemoglobin_b"/>
</dbReference>
<dbReference type="InterPro" id="IPR050056">
    <property type="entry name" value="Hemoglobin_oxygen_transport"/>
</dbReference>
<dbReference type="PANTHER" id="PTHR11442">
    <property type="entry name" value="HEMOGLOBIN FAMILY MEMBER"/>
    <property type="match status" value="1"/>
</dbReference>
<dbReference type="PANTHER" id="PTHR11442:SF7">
    <property type="entry name" value="HEMOGLOBIN SUBUNIT EPSILON"/>
    <property type="match status" value="1"/>
</dbReference>
<dbReference type="Pfam" id="PF00042">
    <property type="entry name" value="Globin"/>
    <property type="match status" value="1"/>
</dbReference>
<dbReference type="PRINTS" id="PR00814">
    <property type="entry name" value="BETAHAEM"/>
</dbReference>
<dbReference type="SUPFAM" id="SSF46458">
    <property type="entry name" value="Globin-like"/>
    <property type="match status" value="1"/>
</dbReference>
<dbReference type="PROSITE" id="PS01033">
    <property type="entry name" value="GLOBIN"/>
    <property type="match status" value="1"/>
</dbReference>
<name>HBB_COLLI</name>
<proteinExistence type="evidence at protein level"/>
<feature type="chain" id="PRO_0000052933" description="Hemoglobin subunit beta">
    <location>
        <begin position="1"/>
        <end position="146"/>
    </location>
</feature>
<feature type="domain" description="Globin" evidence="1">
    <location>
        <begin position="2"/>
        <end position="146"/>
    </location>
</feature>
<feature type="binding site" description="distal binding residue">
    <location>
        <position position="63"/>
    </location>
    <ligand>
        <name>heme b</name>
        <dbReference type="ChEBI" id="CHEBI:60344"/>
    </ligand>
    <ligandPart>
        <name>Fe</name>
        <dbReference type="ChEBI" id="CHEBI:18248"/>
    </ligandPart>
</feature>
<feature type="binding site" description="proximal binding residue">
    <location>
        <position position="92"/>
    </location>
    <ligand>
        <name>heme b</name>
        <dbReference type="ChEBI" id="CHEBI:60344"/>
    </ligand>
    <ligandPart>
        <name>Fe</name>
        <dbReference type="ChEBI" id="CHEBI:18248"/>
    </ligandPart>
</feature>
<feature type="helix" evidence="2">
    <location>
        <begin position="5"/>
        <end position="17"/>
    </location>
</feature>
<feature type="helix" evidence="2">
    <location>
        <begin position="20"/>
        <end position="34"/>
    </location>
</feature>
<feature type="helix" evidence="2">
    <location>
        <begin position="36"/>
        <end position="45"/>
    </location>
</feature>
<feature type="helix" evidence="2">
    <location>
        <begin position="51"/>
        <end position="56"/>
    </location>
</feature>
<feature type="helix" evidence="2">
    <location>
        <begin position="58"/>
        <end position="76"/>
    </location>
</feature>
<feature type="turn" evidence="2">
    <location>
        <begin position="77"/>
        <end position="79"/>
    </location>
</feature>
<feature type="helix" evidence="2">
    <location>
        <begin position="81"/>
        <end position="84"/>
    </location>
</feature>
<feature type="helix" evidence="2">
    <location>
        <begin position="86"/>
        <end position="94"/>
    </location>
</feature>
<feature type="helix" evidence="2">
    <location>
        <begin position="101"/>
        <end position="118"/>
    </location>
</feature>
<feature type="helix" evidence="2">
    <location>
        <begin position="119"/>
        <end position="121"/>
    </location>
</feature>
<feature type="helix" evidence="2">
    <location>
        <begin position="124"/>
        <end position="141"/>
    </location>
</feature>
<feature type="turn" evidence="3">
    <location>
        <begin position="142"/>
        <end position="145"/>
    </location>
</feature>
<sequence length="146" mass="16153">VHWSAEEKQLITSIWGKVNVADCGAEALARLLIVYPWTQRFFSSFGNLSSATAISGNPNVKAHGKKVLTSFGDAVKNLDNIKGTFAQLSELHCDKLHVDPENFRLLGDILVIILAAHFGKDFTPECQAAWQKLVRVVAHALARKYH</sequence>
<organism>
    <name type="scientific">Columba livia</name>
    <name type="common">Rock dove</name>
    <dbReference type="NCBI Taxonomy" id="8932"/>
    <lineage>
        <taxon>Eukaryota</taxon>
        <taxon>Metazoa</taxon>
        <taxon>Chordata</taxon>
        <taxon>Craniata</taxon>
        <taxon>Vertebrata</taxon>
        <taxon>Euteleostomi</taxon>
        <taxon>Archelosauria</taxon>
        <taxon>Archosauria</taxon>
        <taxon>Dinosauria</taxon>
        <taxon>Saurischia</taxon>
        <taxon>Theropoda</taxon>
        <taxon>Coelurosauria</taxon>
        <taxon>Aves</taxon>
        <taxon>Neognathae</taxon>
        <taxon>Neoaves</taxon>
        <taxon>Columbimorphae</taxon>
        <taxon>Columbiformes</taxon>
        <taxon>Columbidae</taxon>
        <taxon>Columba</taxon>
    </lineage>
</organism>
<reference key="1">
    <citation type="journal article" date="1991" name="J. Protein Chem.">
        <title>Primary structure of hemoglobin beta-chain from Columba livia (gray wild pigeon).</title>
        <authorList>
            <person name="Sultana C."/>
            <person name="Abbasi A."/>
            <person name="Zaidi Z.H."/>
        </authorList>
    </citation>
    <scope>PROTEIN SEQUENCE</scope>
</reference>
<keyword id="KW-0002">3D-structure</keyword>
<keyword id="KW-0903">Direct protein sequencing</keyword>
<keyword id="KW-0349">Heme</keyword>
<keyword id="KW-0408">Iron</keyword>
<keyword id="KW-0479">Metal-binding</keyword>
<keyword id="KW-0561">Oxygen transport</keyword>
<keyword id="KW-0813">Transport</keyword>
<accession>P11342</accession>
<protein>
    <recommendedName>
        <fullName>Hemoglobin subunit beta</fullName>
    </recommendedName>
    <alternativeName>
        <fullName>Beta-globin</fullName>
    </alternativeName>
    <alternativeName>
        <fullName>Hemoglobin beta chain</fullName>
    </alternativeName>
</protein>
<comment type="function">
    <text>Involved in oxygen transport from the lung to the various peripheral tissues.</text>
</comment>
<comment type="subunit">
    <text>Heterotetramer of two alpha chains and two beta chains.</text>
</comment>
<comment type="tissue specificity">
    <text>Red blood cells.</text>
</comment>
<comment type="similarity">
    <text evidence="1">Belongs to the globin family.</text>
</comment>
<gene>
    <name type="primary">HBB</name>
</gene>